<accession>B5F4H5</accession>
<proteinExistence type="inferred from homology"/>
<comment type="function">
    <text evidence="1">Catalyzes the NADPH-dependent reduction of glutamyl-tRNA(Glu) to glutamate 1-semialdehyde (GSA).</text>
</comment>
<comment type="catalytic activity">
    <reaction evidence="1">
        <text>(S)-4-amino-5-oxopentanoate + tRNA(Glu) + NADP(+) = L-glutamyl-tRNA(Glu) + NADPH + H(+)</text>
        <dbReference type="Rhea" id="RHEA:12344"/>
        <dbReference type="Rhea" id="RHEA-COMP:9663"/>
        <dbReference type="Rhea" id="RHEA-COMP:9680"/>
        <dbReference type="ChEBI" id="CHEBI:15378"/>
        <dbReference type="ChEBI" id="CHEBI:57501"/>
        <dbReference type="ChEBI" id="CHEBI:57783"/>
        <dbReference type="ChEBI" id="CHEBI:58349"/>
        <dbReference type="ChEBI" id="CHEBI:78442"/>
        <dbReference type="ChEBI" id="CHEBI:78520"/>
        <dbReference type="EC" id="1.2.1.70"/>
    </reaction>
</comment>
<comment type="pathway">
    <text evidence="1">Porphyrin-containing compound metabolism; protoporphyrin-IX biosynthesis; 5-aminolevulinate from L-glutamyl-tRNA(Glu): step 1/2.</text>
</comment>
<comment type="subunit">
    <text evidence="1">Homodimer.</text>
</comment>
<comment type="domain">
    <text evidence="1">Possesses an unusual extended V-shaped dimeric structure with each monomer consisting of three distinct domains arranged along a curved 'spinal' alpha-helix. The N-terminal catalytic domain specifically recognizes the glutamate moiety of the substrate. The second domain is the NADPH-binding domain, and the third C-terminal domain is responsible for dimerization.</text>
</comment>
<comment type="miscellaneous">
    <text evidence="1">During catalysis, the active site Cys acts as a nucleophile attacking the alpha-carbonyl group of tRNA-bound glutamate with the formation of a thioester intermediate between enzyme and glutamate, and the concomitant release of tRNA(Glu). The thioester intermediate is finally reduced by direct hydride transfer from NADPH, to form the product GSA.</text>
</comment>
<comment type="similarity">
    <text evidence="1">Belongs to the glutamyl-tRNA reductase family.</text>
</comment>
<dbReference type="EC" id="1.2.1.70" evidence="1"/>
<dbReference type="EMBL" id="CP001138">
    <property type="protein sequence ID" value="ACH50473.1"/>
    <property type="molecule type" value="Genomic_DNA"/>
</dbReference>
<dbReference type="RefSeq" id="WP_000173208.1">
    <property type="nucleotide sequence ID" value="NC_011149.1"/>
</dbReference>
<dbReference type="SMR" id="B5F4H5"/>
<dbReference type="KEGG" id="sea:SeAg_B1362"/>
<dbReference type="HOGENOM" id="CLU_035113_2_2_6"/>
<dbReference type="UniPathway" id="UPA00251">
    <property type="reaction ID" value="UER00316"/>
</dbReference>
<dbReference type="Proteomes" id="UP000008819">
    <property type="component" value="Chromosome"/>
</dbReference>
<dbReference type="GO" id="GO:0008883">
    <property type="term" value="F:glutamyl-tRNA reductase activity"/>
    <property type="evidence" value="ECO:0007669"/>
    <property type="project" value="UniProtKB-UniRule"/>
</dbReference>
<dbReference type="GO" id="GO:0050661">
    <property type="term" value="F:NADP binding"/>
    <property type="evidence" value="ECO:0007669"/>
    <property type="project" value="InterPro"/>
</dbReference>
<dbReference type="GO" id="GO:0019353">
    <property type="term" value="P:protoporphyrinogen IX biosynthetic process from glutamate"/>
    <property type="evidence" value="ECO:0007669"/>
    <property type="project" value="TreeGrafter"/>
</dbReference>
<dbReference type="CDD" id="cd05213">
    <property type="entry name" value="NAD_bind_Glutamyl_tRNA_reduct"/>
    <property type="match status" value="1"/>
</dbReference>
<dbReference type="FunFam" id="3.30.460.30:FF:000001">
    <property type="entry name" value="Glutamyl-tRNA reductase"/>
    <property type="match status" value="1"/>
</dbReference>
<dbReference type="FunFam" id="3.40.50.720:FF:000031">
    <property type="entry name" value="Glutamyl-tRNA reductase"/>
    <property type="match status" value="1"/>
</dbReference>
<dbReference type="Gene3D" id="3.30.460.30">
    <property type="entry name" value="Glutamyl-tRNA reductase, N-terminal domain"/>
    <property type="match status" value="1"/>
</dbReference>
<dbReference type="Gene3D" id="3.40.50.720">
    <property type="entry name" value="NAD(P)-binding Rossmann-like Domain"/>
    <property type="match status" value="1"/>
</dbReference>
<dbReference type="HAMAP" id="MF_00087">
    <property type="entry name" value="Glu_tRNA_reductase"/>
    <property type="match status" value="1"/>
</dbReference>
<dbReference type="InterPro" id="IPR000343">
    <property type="entry name" value="4pyrrol_synth_GluRdtase"/>
</dbReference>
<dbReference type="InterPro" id="IPR015896">
    <property type="entry name" value="4pyrrol_synth_GluRdtase_dimer"/>
</dbReference>
<dbReference type="InterPro" id="IPR015895">
    <property type="entry name" value="4pyrrol_synth_GluRdtase_N"/>
</dbReference>
<dbReference type="InterPro" id="IPR018214">
    <property type="entry name" value="GluRdtase_CS"/>
</dbReference>
<dbReference type="InterPro" id="IPR036453">
    <property type="entry name" value="GluRdtase_dimer_dom_sf"/>
</dbReference>
<dbReference type="InterPro" id="IPR036343">
    <property type="entry name" value="GluRdtase_N_sf"/>
</dbReference>
<dbReference type="InterPro" id="IPR036291">
    <property type="entry name" value="NAD(P)-bd_dom_sf"/>
</dbReference>
<dbReference type="InterPro" id="IPR006151">
    <property type="entry name" value="Shikm_DH/Glu-tRNA_Rdtase"/>
</dbReference>
<dbReference type="NCBIfam" id="TIGR01035">
    <property type="entry name" value="hemA"/>
    <property type="match status" value="1"/>
</dbReference>
<dbReference type="PANTHER" id="PTHR43013">
    <property type="entry name" value="GLUTAMYL-TRNA REDUCTASE"/>
    <property type="match status" value="1"/>
</dbReference>
<dbReference type="PANTHER" id="PTHR43013:SF1">
    <property type="entry name" value="GLUTAMYL-TRNA REDUCTASE"/>
    <property type="match status" value="1"/>
</dbReference>
<dbReference type="Pfam" id="PF00745">
    <property type="entry name" value="GlutR_dimer"/>
    <property type="match status" value="1"/>
</dbReference>
<dbReference type="Pfam" id="PF05201">
    <property type="entry name" value="GlutR_N"/>
    <property type="match status" value="1"/>
</dbReference>
<dbReference type="Pfam" id="PF01488">
    <property type="entry name" value="Shikimate_DH"/>
    <property type="match status" value="1"/>
</dbReference>
<dbReference type="PIRSF" id="PIRSF000445">
    <property type="entry name" value="4pyrrol_synth_GluRdtase"/>
    <property type="match status" value="1"/>
</dbReference>
<dbReference type="SUPFAM" id="SSF69742">
    <property type="entry name" value="Glutamyl tRNA-reductase catalytic, N-terminal domain"/>
    <property type="match status" value="1"/>
</dbReference>
<dbReference type="SUPFAM" id="SSF69075">
    <property type="entry name" value="Glutamyl tRNA-reductase dimerization domain"/>
    <property type="match status" value="1"/>
</dbReference>
<dbReference type="SUPFAM" id="SSF51735">
    <property type="entry name" value="NAD(P)-binding Rossmann-fold domains"/>
    <property type="match status" value="1"/>
</dbReference>
<dbReference type="PROSITE" id="PS00747">
    <property type="entry name" value="GLUTR"/>
    <property type="match status" value="1"/>
</dbReference>
<sequence>MTLLALGINHKTAPVSLRERVTFSPDTLDQALDSLLAQPMVQGGVVLSTCNRTELYLSVEEQDNLQEALIRWLCDYHNLNEDDLRNSLYWHQDNDAVSHLMRVASGLDSLVLGEPQILGQVKKAFADSQKGHLNASALERMFQKSFSVAKRVRTETDIGASAVSVAFAACTLARQIFESLSTVTVLLVGAGETIELVARHLREHKVQKMIIANRTRERAQALADEVGAEVISLSDIDARLQDADIIISSTASPLPIIGKGMVERALKSRRNQPMLLVDIAVPRDVEPEVGKLANAYLYSVDDLQSIISHNLAQRQAAAVEAETIVEQEASEFMAWLRAQGASETIREYRSQSEQIRDELTTKALSALQQGGDAQAILQDLAWKLTNRLIHAPTKSLQQAARDGDDERLNILRDSLGLE</sequence>
<gene>
    <name evidence="1" type="primary">hemA</name>
    <name type="ordered locus">SeAg_B1362</name>
</gene>
<keyword id="KW-0521">NADP</keyword>
<keyword id="KW-0560">Oxidoreductase</keyword>
<keyword id="KW-0627">Porphyrin biosynthesis</keyword>
<evidence type="ECO:0000255" key="1">
    <source>
        <dbReference type="HAMAP-Rule" id="MF_00087"/>
    </source>
</evidence>
<feature type="chain" id="PRO_1000093161" description="Glutamyl-tRNA reductase">
    <location>
        <begin position="1"/>
        <end position="418"/>
    </location>
</feature>
<feature type="active site" description="Nucleophile" evidence="1">
    <location>
        <position position="50"/>
    </location>
</feature>
<feature type="binding site" evidence="1">
    <location>
        <begin position="49"/>
        <end position="52"/>
    </location>
    <ligand>
        <name>substrate</name>
    </ligand>
</feature>
<feature type="binding site" evidence="1">
    <location>
        <position position="109"/>
    </location>
    <ligand>
        <name>substrate</name>
    </ligand>
</feature>
<feature type="binding site" evidence="1">
    <location>
        <begin position="114"/>
        <end position="116"/>
    </location>
    <ligand>
        <name>substrate</name>
    </ligand>
</feature>
<feature type="binding site" evidence="1">
    <location>
        <position position="120"/>
    </location>
    <ligand>
        <name>substrate</name>
    </ligand>
</feature>
<feature type="binding site" evidence="1">
    <location>
        <begin position="189"/>
        <end position="194"/>
    </location>
    <ligand>
        <name>NADP(+)</name>
        <dbReference type="ChEBI" id="CHEBI:58349"/>
    </ligand>
</feature>
<feature type="site" description="Important for activity" evidence="1">
    <location>
        <position position="99"/>
    </location>
</feature>
<protein>
    <recommendedName>
        <fullName evidence="1">Glutamyl-tRNA reductase</fullName>
        <shortName evidence="1">GluTR</shortName>
        <ecNumber evidence="1">1.2.1.70</ecNumber>
    </recommendedName>
</protein>
<organism>
    <name type="scientific">Salmonella agona (strain SL483)</name>
    <dbReference type="NCBI Taxonomy" id="454166"/>
    <lineage>
        <taxon>Bacteria</taxon>
        <taxon>Pseudomonadati</taxon>
        <taxon>Pseudomonadota</taxon>
        <taxon>Gammaproteobacteria</taxon>
        <taxon>Enterobacterales</taxon>
        <taxon>Enterobacteriaceae</taxon>
        <taxon>Salmonella</taxon>
    </lineage>
</organism>
<name>HEM1_SALA4</name>
<reference key="1">
    <citation type="journal article" date="2011" name="J. Bacteriol.">
        <title>Comparative genomics of 28 Salmonella enterica isolates: evidence for CRISPR-mediated adaptive sublineage evolution.</title>
        <authorList>
            <person name="Fricke W.F."/>
            <person name="Mammel M.K."/>
            <person name="McDermott P.F."/>
            <person name="Tartera C."/>
            <person name="White D.G."/>
            <person name="Leclerc J.E."/>
            <person name="Ravel J."/>
            <person name="Cebula T.A."/>
        </authorList>
    </citation>
    <scope>NUCLEOTIDE SEQUENCE [LARGE SCALE GENOMIC DNA]</scope>
    <source>
        <strain>SL483</strain>
    </source>
</reference>